<gene>
    <name type="primary">J3</name>
</gene>
<evidence type="ECO:0000255" key="1">
    <source>
        <dbReference type="PROSITE-ProRule" id="PRU00160"/>
    </source>
</evidence>
<evidence type="ECO:0000305" key="2"/>
<sequence>MPIEDKRMRIMDFINFVRKPDSLSCIIQEYRAIVPEQEDGASKSCNQAVNRAQDENNALPIVRLVHSRVNLFSKEKVMSARYVDGYNHKQKFIITINSCENNTDKYLQMLWDNNVQIVVTTSSHAEKNNFNRFWSLNERTVITYNNFQIETLEIITKPHFVLTLLVLTDQKGQARKLSHFQYTAWPADGFSHDPKAFLDFFFNIDSLYADLRKHKTIGNVGPITIDCIDNNSSSEVFCVLDICLTEVKKTGMLSIANAVKKVRQKKYGCMNRLNDYVFCYHLIHAYLSMTFDIVKVR</sequence>
<proteinExistence type="inferred from homology"/>
<dbReference type="EC" id="3.1.3.48"/>
<dbReference type="EMBL" id="AY875686">
    <property type="protein sequence ID" value="AAW51793.1"/>
    <property type="molecule type" value="Genomic_DNA"/>
</dbReference>
<dbReference type="RefSeq" id="YP_239389.1">
    <property type="nucleotide sequence ID" value="NC_007036.1"/>
</dbReference>
<dbReference type="SMR" id="Q5I139"/>
<dbReference type="KEGG" id="vg:5075822"/>
<dbReference type="Proteomes" id="UP000008168">
    <property type="component" value="Genome"/>
</dbReference>
<dbReference type="GO" id="GO:0004725">
    <property type="term" value="F:protein tyrosine phosphatase activity"/>
    <property type="evidence" value="ECO:0007669"/>
    <property type="project" value="UniProtKB-EC"/>
</dbReference>
<dbReference type="Gene3D" id="3.90.190.10">
    <property type="entry name" value="Protein tyrosine phosphatase superfamily"/>
    <property type="match status" value="1"/>
</dbReference>
<dbReference type="InterPro" id="IPR029021">
    <property type="entry name" value="Prot-tyrosine_phosphatase-like"/>
</dbReference>
<dbReference type="InterPro" id="IPR050348">
    <property type="entry name" value="Protein-Tyr_Phosphatase"/>
</dbReference>
<dbReference type="InterPro" id="IPR000242">
    <property type="entry name" value="PTP_cat"/>
</dbReference>
<dbReference type="InterPro" id="IPR003595">
    <property type="entry name" value="Tyr_Pase_cat"/>
</dbReference>
<dbReference type="InterPro" id="IPR000387">
    <property type="entry name" value="Tyr_Pase_dom"/>
</dbReference>
<dbReference type="PANTHER" id="PTHR19134:SF534">
    <property type="entry name" value="LD27988P"/>
    <property type="match status" value="1"/>
</dbReference>
<dbReference type="PANTHER" id="PTHR19134">
    <property type="entry name" value="RECEPTOR-TYPE TYROSINE-PROTEIN PHOSPHATASE"/>
    <property type="match status" value="1"/>
</dbReference>
<dbReference type="Pfam" id="PF00102">
    <property type="entry name" value="Y_phosphatase"/>
    <property type="match status" value="1"/>
</dbReference>
<dbReference type="PRINTS" id="PR00700">
    <property type="entry name" value="PRTYPHPHTASE"/>
</dbReference>
<dbReference type="SMART" id="SM00194">
    <property type="entry name" value="PTPc"/>
    <property type="match status" value="1"/>
</dbReference>
<dbReference type="SMART" id="SM00404">
    <property type="entry name" value="PTPc_motif"/>
    <property type="match status" value="1"/>
</dbReference>
<dbReference type="SUPFAM" id="SSF52799">
    <property type="entry name" value="(Phosphotyrosine protein) phosphatases II"/>
    <property type="match status" value="1"/>
</dbReference>
<dbReference type="PROSITE" id="PS50056">
    <property type="entry name" value="TYR_PHOSPHATASE_2"/>
    <property type="match status" value="1"/>
</dbReference>
<dbReference type="PROSITE" id="PS50055">
    <property type="entry name" value="TYR_PHOSPHATASE_PTP"/>
    <property type="match status" value="1"/>
</dbReference>
<organismHost>
    <name type="scientific">Microplitis demolitor</name>
    <name type="common">Parasitoid wasp</name>
    <dbReference type="NCBI Taxonomy" id="69319"/>
</organismHost>
<name>PTPJ2_MDBVW</name>
<protein>
    <recommendedName>
        <fullName>Probable tyrosine phosphatase protein J2</fullName>
        <shortName>PTP-J2</shortName>
        <ecNumber>3.1.3.48</ecNumber>
    </recommendedName>
</protein>
<accession>Q5I139</accession>
<organism>
    <name type="scientific">Microplitis demolitor bracovirus (isolate Webb)</name>
    <name type="common">MdBV</name>
    <dbReference type="NCBI Taxonomy" id="654919"/>
    <lineage>
        <taxon>Viruses</taxon>
        <taxon>Viruses incertae sedis</taxon>
        <taxon>Polydnaviriformidae</taxon>
        <taxon>Bracoviriform</taxon>
        <taxon>Microplitis demolitor bracovirus</taxon>
    </lineage>
</organism>
<comment type="catalytic activity">
    <reaction>
        <text>O-phospho-L-tyrosyl-[protein] + H2O = L-tyrosyl-[protein] + phosphate</text>
        <dbReference type="Rhea" id="RHEA:10684"/>
        <dbReference type="Rhea" id="RHEA-COMP:10136"/>
        <dbReference type="Rhea" id="RHEA-COMP:20101"/>
        <dbReference type="ChEBI" id="CHEBI:15377"/>
        <dbReference type="ChEBI" id="CHEBI:43474"/>
        <dbReference type="ChEBI" id="CHEBI:46858"/>
        <dbReference type="ChEBI" id="CHEBI:61978"/>
        <dbReference type="EC" id="3.1.3.48"/>
    </reaction>
</comment>
<comment type="similarity">
    <text evidence="2">Belongs to the protein-tyrosine phosphatase family.</text>
</comment>
<keyword id="KW-0378">Hydrolase</keyword>
<keyword id="KW-0904">Protein phosphatase</keyword>
<keyword id="KW-1185">Reference proteome</keyword>
<feature type="chain" id="PRO_0000405356" description="Probable tyrosine phosphatase protein J2">
    <location>
        <begin position="1"/>
        <end position="297"/>
    </location>
</feature>
<feature type="domain" description="Tyrosine-protein phosphatase" evidence="1">
    <location>
        <begin position="21"/>
        <end position="286"/>
    </location>
</feature>
<feature type="active site" description="Phosphocysteine intermediate" evidence="1">
    <location>
        <position position="227"/>
    </location>
</feature>
<reference key="1">
    <citation type="journal article" date="2006" name="Virology">
        <title>Polydnavirus genomes reflect their dual roles as mutualists and pathogens.</title>
        <authorList>
            <person name="Webb B.A."/>
            <person name="Strand M.R."/>
            <person name="Dickey S.E."/>
            <person name="Beck M.H."/>
            <person name="Hilgarth R.S."/>
            <person name="Barney W.E."/>
            <person name="Kadash K."/>
            <person name="Kroemer J.A."/>
            <person name="Lindstrom K.G."/>
            <person name="Rattanadechakul W."/>
            <person name="Shelby K.S."/>
            <person name="Thoetkiattikul H."/>
            <person name="Turnbull M.W."/>
            <person name="Witherell R.A."/>
        </authorList>
    </citation>
    <scope>NUCLEOTIDE SEQUENCE [GENOMIC DNA]</scope>
</reference>